<sequence>MTDFALNAEVRSDLGKGASRRLRRNAAQVPAVIYGGDKEPQSISILAKDITKLIEDEAAFSHVITLNIAGATETVLIKALQRHPSKAAVMHADFLRVVADHKLSAVVPLHFVNAETSVGVKQQGGEVSHVISEVEVSCLPKDLPEFIEVDLAQVEVGQIVHLSNLSVPAGVELVALAHGNDLAVANIHASRVKEEGAE</sequence>
<gene>
    <name evidence="1" type="primary">rplY</name>
    <name evidence="1" type="synonym">ctc</name>
    <name type="ordered locus">Avin_41530</name>
</gene>
<reference key="1">
    <citation type="journal article" date="2009" name="J. Bacteriol.">
        <title>Genome sequence of Azotobacter vinelandii, an obligate aerobe specialized to support diverse anaerobic metabolic processes.</title>
        <authorList>
            <person name="Setubal J.C."/>
            <person name="Dos Santos P."/>
            <person name="Goldman B.S."/>
            <person name="Ertesvaag H."/>
            <person name="Espin G."/>
            <person name="Rubio L.M."/>
            <person name="Valla S."/>
            <person name="Almeida N.F."/>
            <person name="Balasubramanian D."/>
            <person name="Cromes L."/>
            <person name="Curatti L."/>
            <person name="Du Z."/>
            <person name="Godsy E."/>
            <person name="Goodner B."/>
            <person name="Hellner-Burris K."/>
            <person name="Hernandez J.A."/>
            <person name="Houmiel K."/>
            <person name="Imperial J."/>
            <person name="Kennedy C."/>
            <person name="Larson T.J."/>
            <person name="Latreille P."/>
            <person name="Ligon L.S."/>
            <person name="Lu J."/>
            <person name="Maerk M."/>
            <person name="Miller N.M."/>
            <person name="Norton S."/>
            <person name="O'Carroll I.P."/>
            <person name="Paulsen I."/>
            <person name="Raulfs E.C."/>
            <person name="Roemer R."/>
            <person name="Rosser J."/>
            <person name="Segura D."/>
            <person name="Slater S."/>
            <person name="Stricklin S.L."/>
            <person name="Studholme D.J."/>
            <person name="Sun J."/>
            <person name="Viana C.J."/>
            <person name="Wallin E."/>
            <person name="Wang B."/>
            <person name="Wheeler C."/>
            <person name="Zhu H."/>
            <person name="Dean D.R."/>
            <person name="Dixon R."/>
            <person name="Wood D."/>
        </authorList>
    </citation>
    <scope>NUCLEOTIDE SEQUENCE [LARGE SCALE GENOMIC DNA]</scope>
    <source>
        <strain>DJ / ATCC BAA-1303</strain>
    </source>
</reference>
<evidence type="ECO:0000255" key="1">
    <source>
        <dbReference type="HAMAP-Rule" id="MF_01334"/>
    </source>
</evidence>
<evidence type="ECO:0000305" key="2"/>
<name>RL25_AZOVD</name>
<accession>C1DEV6</accession>
<protein>
    <recommendedName>
        <fullName evidence="1">Large ribosomal subunit protein bL25</fullName>
    </recommendedName>
    <alternativeName>
        <fullName evidence="2">50S ribosomal protein L25</fullName>
    </alternativeName>
    <alternativeName>
        <fullName evidence="1">General stress protein CTC</fullName>
    </alternativeName>
</protein>
<dbReference type="EMBL" id="CP001157">
    <property type="protein sequence ID" value="ACO80285.1"/>
    <property type="molecule type" value="Genomic_DNA"/>
</dbReference>
<dbReference type="RefSeq" id="WP_012702658.1">
    <property type="nucleotide sequence ID" value="NC_012560.1"/>
</dbReference>
<dbReference type="SMR" id="C1DEV6"/>
<dbReference type="STRING" id="322710.Avin_41530"/>
<dbReference type="EnsemblBacteria" id="ACO80285">
    <property type="protein sequence ID" value="ACO80285"/>
    <property type="gene ID" value="Avin_41530"/>
</dbReference>
<dbReference type="GeneID" id="88187086"/>
<dbReference type="KEGG" id="avn:Avin_41530"/>
<dbReference type="eggNOG" id="COG1825">
    <property type="taxonomic scope" value="Bacteria"/>
</dbReference>
<dbReference type="HOGENOM" id="CLU_075939_0_1_6"/>
<dbReference type="OrthoDB" id="9806411at2"/>
<dbReference type="Proteomes" id="UP000002424">
    <property type="component" value="Chromosome"/>
</dbReference>
<dbReference type="GO" id="GO:0022625">
    <property type="term" value="C:cytosolic large ribosomal subunit"/>
    <property type="evidence" value="ECO:0007669"/>
    <property type="project" value="TreeGrafter"/>
</dbReference>
<dbReference type="GO" id="GO:0008097">
    <property type="term" value="F:5S rRNA binding"/>
    <property type="evidence" value="ECO:0007669"/>
    <property type="project" value="InterPro"/>
</dbReference>
<dbReference type="GO" id="GO:0003735">
    <property type="term" value="F:structural constituent of ribosome"/>
    <property type="evidence" value="ECO:0007669"/>
    <property type="project" value="InterPro"/>
</dbReference>
<dbReference type="GO" id="GO:0006412">
    <property type="term" value="P:translation"/>
    <property type="evidence" value="ECO:0007669"/>
    <property type="project" value="UniProtKB-UniRule"/>
</dbReference>
<dbReference type="CDD" id="cd00495">
    <property type="entry name" value="Ribosomal_L25_TL5_CTC"/>
    <property type="match status" value="1"/>
</dbReference>
<dbReference type="Gene3D" id="2.170.120.20">
    <property type="entry name" value="Ribosomal protein L25, beta domain"/>
    <property type="match status" value="1"/>
</dbReference>
<dbReference type="Gene3D" id="2.40.240.10">
    <property type="entry name" value="Ribosomal Protein L25, Chain P"/>
    <property type="match status" value="1"/>
</dbReference>
<dbReference type="HAMAP" id="MF_01334">
    <property type="entry name" value="Ribosomal_bL25_CTC"/>
    <property type="match status" value="1"/>
</dbReference>
<dbReference type="InterPro" id="IPR020056">
    <property type="entry name" value="Rbsml_bL25/Gln-tRNA_synth_N"/>
</dbReference>
<dbReference type="InterPro" id="IPR011035">
    <property type="entry name" value="Ribosomal_bL25/Gln-tRNA_synth"/>
</dbReference>
<dbReference type="InterPro" id="IPR020057">
    <property type="entry name" value="Ribosomal_bL25_b-dom"/>
</dbReference>
<dbReference type="InterPro" id="IPR037121">
    <property type="entry name" value="Ribosomal_bL25_C"/>
</dbReference>
<dbReference type="InterPro" id="IPR001021">
    <property type="entry name" value="Ribosomal_bL25_long"/>
</dbReference>
<dbReference type="InterPro" id="IPR029751">
    <property type="entry name" value="Ribosomal_L25_dom"/>
</dbReference>
<dbReference type="InterPro" id="IPR020930">
    <property type="entry name" value="Ribosomal_uL5_bac-type"/>
</dbReference>
<dbReference type="NCBIfam" id="TIGR00731">
    <property type="entry name" value="bL25_bact_ctc"/>
    <property type="match status" value="1"/>
</dbReference>
<dbReference type="NCBIfam" id="NF004128">
    <property type="entry name" value="PRK05618.1-2"/>
    <property type="match status" value="1"/>
</dbReference>
<dbReference type="NCBIfam" id="NF004130">
    <property type="entry name" value="PRK05618.1-5"/>
    <property type="match status" value="1"/>
</dbReference>
<dbReference type="NCBIfam" id="NF004612">
    <property type="entry name" value="PRK05943.1"/>
    <property type="match status" value="1"/>
</dbReference>
<dbReference type="PANTHER" id="PTHR33284">
    <property type="entry name" value="RIBOSOMAL PROTEIN L25/GLN-TRNA SYNTHETASE, ANTI-CODON-BINDING DOMAIN-CONTAINING PROTEIN"/>
    <property type="match status" value="1"/>
</dbReference>
<dbReference type="PANTHER" id="PTHR33284:SF1">
    <property type="entry name" value="RIBOSOMAL PROTEIN L25_GLN-TRNA SYNTHETASE, ANTI-CODON-BINDING DOMAIN-CONTAINING PROTEIN"/>
    <property type="match status" value="1"/>
</dbReference>
<dbReference type="Pfam" id="PF01386">
    <property type="entry name" value="Ribosomal_L25p"/>
    <property type="match status" value="1"/>
</dbReference>
<dbReference type="Pfam" id="PF14693">
    <property type="entry name" value="Ribosomal_TL5_C"/>
    <property type="match status" value="1"/>
</dbReference>
<dbReference type="SUPFAM" id="SSF50715">
    <property type="entry name" value="Ribosomal protein L25-like"/>
    <property type="match status" value="1"/>
</dbReference>
<comment type="function">
    <text evidence="1">This is one of the proteins that binds to the 5S RNA in the ribosome where it forms part of the central protuberance.</text>
</comment>
<comment type="subunit">
    <text evidence="1">Part of the 50S ribosomal subunit; part of the 5S rRNA/L5/L18/L25 subcomplex. Contacts the 5S rRNA. Binds to the 5S rRNA independently of L5 and L18.</text>
</comment>
<comment type="similarity">
    <text evidence="1">Belongs to the bacterial ribosomal protein bL25 family. CTC subfamily.</text>
</comment>
<organism>
    <name type="scientific">Azotobacter vinelandii (strain DJ / ATCC BAA-1303)</name>
    <dbReference type="NCBI Taxonomy" id="322710"/>
    <lineage>
        <taxon>Bacteria</taxon>
        <taxon>Pseudomonadati</taxon>
        <taxon>Pseudomonadota</taxon>
        <taxon>Gammaproteobacteria</taxon>
        <taxon>Pseudomonadales</taxon>
        <taxon>Pseudomonadaceae</taxon>
        <taxon>Azotobacter</taxon>
    </lineage>
</organism>
<proteinExistence type="inferred from homology"/>
<feature type="chain" id="PRO_1000214646" description="Large ribosomal subunit protein bL25">
    <location>
        <begin position="1"/>
        <end position="198"/>
    </location>
</feature>
<keyword id="KW-0687">Ribonucleoprotein</keyword>
<keyword id="KW-0689">Ribosomal protein</keyword>
<keyword id="KW-0694">RNA-binding</keyword>
<keyword id="KW-0699">rRNA-binding</keyword>